<evidence type="ECO:0000255" key="1">
    <source>
        <dbReference type="HAMAP-Rule" id="MF_01819"/>
    </source>
</evidence>
<evidence type="ECO:0000269" key="2">
    <source>
    </source>
</evidence>
<organism>
    <name type="scientific">Salmonella choleraesuis (strain SC-B67)</name>
    <dbReference type="NCBI Taxonomy" id="321314"/>
    <lineage>
        <taxon>Bacteria</taxon>
        <taxon>Pseudomonadati</taxon>
        <taxon>Pseudomonadota</taxon>
        <taxon>Gammaproteobacteria</taxon>
        <taxon>Enterobacterales</taxon>
        <taxon>Enterobacteriaceae</taxon>
        <taxon>Salmonella</taxon>
    </lineage>
</organism>
<accession>P61090</accession>
<accession>O54521</accession>
<accession>Q57PJ3</accession>
<feature type="chain" id="PRO_0000054391" description="Transcriptional regulator SlyA">
    <location>
        <begin position="1"/>
        <end position="144"/>
    </location>
</feature>
<feature type="domain" description="HTH marR-type" evidence="1">
    <location>
        <begin position="2"/>
        <end position="135"/>
    </location>
</feature>
<feature type="DNA-binding region" description="H-T-H motif" evidence="1">
    <location>
        <begin position="49"/>
        <end position="72"/>
    </location>
</feature>
<comment type="function">
    <text evidence="1 2">Transcription regulator that can specifically activate or repress expression of target genes. Required to activate expression of virulent genes.</text>
</comment>
<comment type="subunit">
    <text evidence="1">Homodimer.</text>
</comment>
<comment type="similarity">
    <text evidence="1">Belongs to the SlyA family.</text>
</comment>
<gene>
    <name evidence="1" type="primary">slyA</name>
    <name type="ordered locus">SCH_1462</name>
</gene>
<reference key="1">
    <citation type="journal article" date="1999" name="Microbiol. Immunol.">
        <title>TTG as the initiation codon of Salmonella slyA, a gene required for survival within macrophages.</title>
        <authorList>
            <person name="Kawakami T."/>
            <person name="Kaneko A."/>
            <person name="Okada N."/>
            <person name="Imajoh-Ohmi S."/>
            <person name="Nonaka T."/>
            <person name="Matsui H."/>
            <person name="Kawahara K."/>
            <person name="Danbara H."/>
        </authorList>
    </citation>
    <scope>NUCLEOTIDE SEQUENCE [GENOMIC DNA]</scope>
    <source>
        <strain>RF-1</strain>
    </source>
</reference>
<reference key="2">
    <citation type="submission" date="2000-03" db="EMBL/GenBank/DDBJ databases">
        <title>The slyA gene of Salmonella choleraesuis.</title>
        <authorList>
            <person name="Chang G."/>
            <person name="Ho K.C."/>
        </authorList>
    </citation>
    <scope>NUCLEOTIDE SEQUENCE [GENOMIC DNA]</scope>
    <source>
        <strain>CH12440 / Serotype C1</strain>
    </source>
</reference>
<reference key="3">
    <citation type="journal article" date="2005" name="Nucleic Acids Res.">
        <title>The genome sequence of Salmonella enterica serovar Choleraesuis, a highly invasive and resistant zoonotic pathogen.</title>
        <authorList>
            <person name="Chiu C.-H."/>
            <person name="Tang P."/>
            <person name="Chu C."/>
            <person name="Hu S."/>
            <person name="Bao Q."/>
            <person name="Yu J."/>
            <person name="Chou Y.-Y."/>
            <person name="Wang H.-S."/>
            <person name="Lee Y.-S."/>
        </authorList>
    </citation>
    <scope>NUCLEOTIDE SEQUENCE [LARGE SCALE GENOMIC DNA]</scope>
    <source>
        <strain>SC-B67</strain>
    </source>
</reference>
<reference key="4">
    <citation type="journal article" date="2002" name="Microbiol. Immunol.">
        <title>Association of a regulatory gene, slyA with a mouse virulence of Salmonella serovar Choleraesuis.</title>
        <authorList>
            <person name="Kaneko A."/>
            <person name="Mita M."/>
            <person name="Sekiya K."/>
            <person name="Matsui H."/>
            <person name="Kawahara K."/>
            <person name="Danbara H."/>
        </authorList>
    </citation>
    <scope>FUNCTION</scope>
</reference>
<sequence length="144" mass="16448">MESPLGSDLARLVRIWRALIDHRLKPLELTQTHWVTLHNIHQLPPDQSQIQLAKAIGIEQPSLVRTLDQLEDKGLISRQTCASDRRAKRIKLTEKAEPLIAEMEEVIHKTRGEILAGISSEEIELLIKLVAKLEHNIMELHSHD</sequence>
<dbReference type="EMBL" id="AB010776">
    <property type="protein sequence ID" value="BAA24581.1"/>
    <property type="molecule type" value="Genomic_DNA"/>
</dbReference>
<dbReference type="EMBL" id="AF242419">
    <property type="protein sequence ID" value="AAL55673.1"/>
    <property type="molecule type" value="Genomic_DNA"/>
</dbReference>
<dbReference type="EMBL" id="AE017220">
    <property type="protein sequence ID" value="AAX65368.1"/>
    <property type="molecule type" value="Genomic_DNA"/>
</dbReference>
<dbReference type="RefSeq" id="WP_000445639.1">
    <property type="nucleotide sequence ID" value="NC_006905.1"/>
</dbReference>
<dbReference type="SMR" id="P61090"/>
<dbReference type="KEGG" id="sec:SCH_1462"/>
<dbReference type="HOGENOM" id="CLU_083287_18_2_6"/>
<dbReference type="Proteomes" id="UP000000538">
    <property type="component" value="Chromosome"/>
</dbReference>
<dbReference type="GO" id="GO:0003677">
    <property type="term" value="F:DNA binding"/>
    <property type="evidence" value="ECO:0007669"/>
    <property type="project" value="UniProtKB-UniRule"/>
</dbReference>
<dbReference type="GO" id="GO:0003700">
    <property type="term" value="F:DNA-binding transcription factor activity"/>
    <property type="evidence" value="ECO:0007669"/>
    <property type="project" value="UniProtKB-UniRule"/>
</dbReference>
<dbReference type="GO" id="GO:0006950">
    <property type="term" value="P:response to stress"/>
    <property type="evidence" value="ECO:0007669"/>
    <property type="project" value="TreeGrafter"/>
</dbReference>
<dbReference type="FunFam" id="1.10.10.10:FF:000261">
    <property type="entry name" value="Transcriptional regulator SlyA"/>
    <property type="match status" value="1"/>
</dbReference>
<dbReference type="Gene3D" id="1.10.10.10">
    <property type="entry name" value="Winged helix-like DNA-binding domain superfamily/Winged helix DNA-binding domain"/>
    <property type="match status" value="1"/>
</dbReference>
<dbReference type="HAMAP" id="MF_01819">
    <property type="entry name" value="HTH_type_SlyA"/>
    <property type="match status" value="1"/>
</dbReference>
<dbReference type="InterPro" id="IPR000835">
    <property type="entry name" value="HTH_MarR-typ"/>
</dbReference>
<dbReference type="InterPro" id="IPR039422">
    <property type="entry name" value="MarR/SlyA-like"/>
</dbReference>
<dbReference type="InterPro" id="IPR023187">
    <property type="entry name" value="Tscrpt_reg_MarR-type_CS"/>
</dbReference>
<dbReference type="InterPro" id="IPR023071">
    <property type="entry name" value="Tscrpt_reg_SlyA"/>
</dbReference>
<dbReference type="InterPro" id="IPR036388">
    <property type="entry name" value="WH-like_DNA-bd_sf"/>
</dbReference>
<dbReference type="InterPro" id="IPR036390">
    <property type="entry name" value="WH_DNA-bd_sf"/>
</dbReference>
<dbReference type="NCBIfam" id="NF002926">
    <property type="entry name" value="PRK03573.1"/>
    <property type="match status" value="1"/>
</dbReference>
<dbReference type="PANTHER" id="PTHR33164:SF64">
    <property type="entry name" value="TRANSCRIPTIONAL REGULATOR SLYA"/>
    <property type="match status" value="1"/>
</dbReference>
<dbReference type="PANTHER" id="PTHR33164">
    <property type="entry name" value="TRANSCRIPTIONAL REGULATOR, MARR FAMILY"/>
    <property type="match status" value="1"/>
</dbReference>
<dbReference type="Pfam" id="PF01047">
    <property type="entry name" value="MarR"/>
    <property type="match status" value="1"/>
</dbReference>
<dbReference type="PRINTS" id="PR00598">
    <property type="entry name" value="HTHMARR"/>
</dbReference>
<dbReference type="SMART" id="SM00347">
    <property type="entry name" value="HTH_MARR"/>
    <property type="match status" value="1"/>
</dbReference>
<dbReference type="SUPFAM" id="SSF46785">
    <property type="entry name" value="Winged helix' DNA-binding domain"/>
    <property type="match status" value="1"/>
</dbReference>
<dbReference type="PROSITE" id="PS01117">
    <property type="entry name" value="HTH_MARR_1"/>
    <property type="match status" value="1"/>
</dbReference>
<dbReference type="PROSITE" id="PS50995">
    <property type="entry name" value="HTH_MARR_2"/>
    <property type="match status" value="1"/>
</dbReference>
<keyword id="KW-0010">Activator</keyword>
<keyword id="KW-0238">DNA-binding</keyword>
<keyword id="KW-0678">Repressor</keyword>
<keyword id="KW-0804">Transcription</keyword>
<keyword id="KW-0805">Transcription regulation</keyword>
<keyword id="KW-0843">Virulence</keyword>
<proteinExistence type="inferred from homology"/>
<protein>
    <recommendedName>
        <fullName evidence="1">Transcriptional regulator SlyA</fullName>
    </recommendedName>
</protein>
<name>SLYA_SALCH</name>